<feature type="chain" id="PRO_0000460337" description="RNA-binding protein Unr">
    <location>
        <begin position="1"/>
        <end position="1039"/>
    </location>
</feature>
<feature type="domain" description="CSD 1" evidence="1">
    <location>
        <begin position="186"/>
        <end position="250"/>
    </location>
</feature>
<feature type="domain" description="CSD 2; degenerate" evidence="13">
    <location>
        <begin position="261"/>
        <end position="337"/>
    </location>
</feature>
<feature type="domain" description="CSD 3" evidence="1">
    <location>
        <begin position="345"/>
        <end position="413"/>
    </location>
</feature>
<feature type="domain" description="CSD 4; degenerate" evidence="13">
    <location>
        <begin position="428"/>
        <end position="503"/>
    </location>
</feature>
<feature type="domain" description="CSD 5" evidence="1">
    <location>
        <begin position="517"/>
        <end position="585"/>
    </location>
</feature>
<feature type="domain" description="CSD 6; degenerate" evidence="13">
    <location>
        <begin position="593"/>
        <end position="673"/>
    </location>
</feature>
<feature type="domain" description="CSD 7" evidence="1">
    <location>
        <begin position="763"/>
        <end position="831"/>
    </location>
</feature>
<feature type="domain" description="CSD 8; degenerate" evidence="13">
    <location>
        <begin position="846"/>
        <end position="919"/>
    </location>
</feature>
<feature type="domain" description="CSD 9" evidence="1">
    <location>
        <begin position="922"/>
        <end position="987"/>
    </location>
</feature>
<feature type="region of interest" description="Disordered" evidence="2">
    <location>
        <begin position="49"/>
        <end position="126"/>
    </location>
</feature>
<feature type="region of interest" description="Disordered" evidence="2">
    <location>
        <begin position="165"/>
        <end position="184"/>
    </location>
</feature>
<feature type="region of interest" description="Disordered" evidence="2">
    <location>
        <begin position="721"/>
        <end position="741"/>
    </location>
</feature>
<feature type="compositionally biased region" description="Polar residues" evidence="2">
    <location>
        <begin position="49"/>
        <end position="62"/>
    </location>
</feature>
<feature type="compositionally biased region" description="Low complexity" evidence="2">
    <location>
        <begin position="63"/>
        <end position="80"/>
    </location>
</feature>
<feature type="compositionally biased region" description="Low complexity" evidence="2">
    <location>
        <begin position="89"/>
        <end position="126"/>
    </location>
</feature>
<feature type="compositionally biased region" description="Low complexity" evidence="2">
    <location>
        <begin position="165"/>
        <end position="182"/>
    </location>
</feature>
<feature type="compositionally biased region" description="Low complexity" evidence="2">
    <location>
        <begin position="732"/>
        <end position="741"/>
    </location>
</feature>
<feature type="splice variant" id="VSP_062303" description="In isoform B.">
    <original>S</original>
    <variation>SVSGSGDPTNPNMLQSKMQ</variation>
    <location>
        <position position="396"/>
    </location>
</feature>
<feature type="splice variant" id="VSP_062304" description="In isoform C.">
    <location>
        <begin position="397"/>
        <end position="403"/>
    </location>
</feature>
<feature type="mutagenesis site" description="Decreased association with the 3'-UTR of msl-2 transcripts." evidence="5">
    <original>Y</original>
    <variation>A</variation>
    <location>
        <position position="198"/>
    </location>
</feature>
<feature type="mutagenesis site" description="Does not affect association with the 3'-UTR of msl-2 transcripts." evidence="5">
    <original>Q</original>
    <variation>A</variation>
    <location>
        <position position="202"/>
    </location>
</feature>
<feature type="mutagenesis site" description="Does not affect association with the 3'-UTR of msl-2 transcripts." evidence="5">
    <original>Q</original>
    <variation>A</variation>
    <location>
        <position position="216"/>
    </location>
</feature>
<feature type="mutagenesis site" description="Decreased association with the 3'-UTR of msl-2 transcripts." evidence="5">
    <original>K</original>
    <variation>A</variation>
    <location>
        <position position="225"/>
    </location>
</feature>
<feature type="mutagenesis site" description="Does not affect association with the 3'-UTR of msl-2 transcripts." evidence="5">
    <original>E</original>
    <variation>A</variation>
    <location>
        <position position="233"/>
    </location>
</feature>
<feature type="mutagenesis site" description="Decreased association with the 3'-UTR of msl-2 transcripts." evidence="5">
    <original>D</original>
    <variation>A</variation>
    <location>
        <position position="237"/>
    </location>
</feature>
<feature type="mutagenesis site" description="Does not affect association with the 3'-UTR of msl-2 transcripts." evidence="5">
    <original>R</original>
    <variation>A</variation>
    <location>
        <position position="238"/>
    </location>
</feature>
<feature type="mutagenesis site" description="Does not affect association with the 3'-UTR of msl-2 transcripts." evidence="5">
    <original>I</original>
    <variation>A</variation>
    <location>
        <position position="244"/>
    </location>
</feature>
<feature type="mutagenesis site" description="Decreased affinity to RNA." evidence="10">
    <original>E</original>
    <variation>A</variation>
    <location>
        <position position="786"/>
    </location>
</feature>
<feature type="mutagenesis site" description="Decreased affinity to RNA." evidence="10">
    <original>R</original>
    <variation>A</variation>
    <location>
        <position position="856"/>
    </location>
</feature>
<feature type="mutagenesis site" description="Decreased affinity to RNA." evidence="10">
    <original>Q</original>
    <variation>A</variation>
    <location>
        <position position="898"/>
    </location>
</feature>
<feature type="mutagenesis site" description="Decreased affinity to RNA." evidence="10">
    <original>Q</original>
    <variation>A</variation>
    <location>
        <position position="975"/>
    </location>
</feature>
<feature type="mutagenesis site" description="Strongly reduced binding to RNA." evidence="10">
    <original>NGK</original>
    <variation>AGA</variation>
    <location>
        <begin position="977"/>
        <end position="979"/>
    </location>
</feature>
<feature type="mutagenesis site" description="Decreased affinity to RNA." evidence="10">
    <original>N</original>
    <variation>A</variation>
    <location>
        <position position="977"/>
    </location>
</feature>
<feature type="mutagenesis site" description="Decreased affinity to RNA." evidence="10">
    <original>K</original>
    <variation>A</variation>
    <location>
        <position position="979"/>
    </location>
</feature>
<feature type="strand" evidence="20">
    <location>
        <begin position="187"/>
        <end position="194"/>
    </location>
</feature>
<feature type="strand" evidence="20">
    <location>
        <begin position="196"/>
        <end position="207"/>
    </location>
</feature>
<feature type="strand" evidence="20">
    <location>
        <begin position="209"/>
        <end position="213"/>
    </location>
</feature>
<feature type="helix" evidence="20">
    <location>
        <begin position="214"/>
        <end position="216"/>
    </location>
</feature>
<feature type="helix" evidence="23">
    <location>
        <begin position="221"/>
        <end position="223"/>
    </location>
</feature>
<feature type="strand" evidence="20">
    <location>
        <begin position="229"/>
        <end position="236"/>
    </location>
</feature>
<feature type="strand" evidence="20">
    <location>
        <begin position="238"/>
        <end position="240"/>
    </location>
</feature>
<feature type="strand" evidence="20">
    <location>
        <begin position="243"/>
        <end position="250"/>
    </location>
</feature>
<feature type="strand" evidence="23">
    <location>
        <begin position="261"/>
        <end position="268"/>
    </location>
</feature>
<feature type="strand" evidence="23">
    <location>
        <begin position="286"/>
        <end position="292"/>
    </location>
</feature>
<feature type="strand" evidence="23">
    <location>
        <begin position="295"/>
        <end position="301"/>
    </location>
</feature>
<feature type="helix" evidence="23">
    <location>
        <begin position="303"/>
        <end position="305"/>
    </location>
</feature>
<feature type="strand" evidence="23">
    <location>
        <begin position="316"/>
        <end position="321"/>
    </location>
</feature>
<feature type="strand" evidence="23">
    <location>
        <begin position="333"/>
        <end position="339"/>
    </location>
</feature>
<feature type="strand" evidence="22">
    <location>
        <begin position="429"/>
        <end position="435"/>
    </location>
</feature>
<feature type="strand" evidence="22">
    <location>
        <begin position="452"/>
        <end position="457"/>
    </location>
</feature>
<feature type="strand" evidence="22">
    <location>
        <begin position="463"/>
        <end position="468"/>
    </location>
</feature>
<feature type="helix" evidence="22">
    <location>
        <begin position="470"/>
        <end position="472"/>
    </location>
</feature>
<feature type="strand" evidence="22">
    <location>
        <begin position="473"/>
        <end position="476"/>
    </location>
</feature>
<feature type="strand" evidence="22">
    <location>
        <begin position="484"/>
        <end position="492"/>
    </location>
</feature>
<feature type="turn" evidence="22">
    <location>
        <begin position="493"/>
        <end position="496"/>
    </location>
</feature>
<feature type="strand" evidence="22">
    <location>
        <begin position="497"/>
        <end position="505"/>
    </location>
</feature>
<feature type="helix" evidence="22">
    <location>
        <begin position="509"/>
        <end position="513"/>
    </location>
</feature>
<feature type="strand" evidence="22">
    <location>
        <begin position="517"/>
        <end position="525"/>
    </location>
</feature>
<feature type="strand" evidence="22">
    <location>
        <begin position="527"/>
        <end position="536"/>
    </location>
</feature>
<feature type="strand" evidence="22">
    <location>
        <begin position="541"/>
        <end position="544"/>
    </location>
</feature>
<feature type="helix" evidence="22">
    <location>
        <begin position="545"/>
        <end position="547"/>
    </location>
</feature>
<feature type="strand" evidence="22">
    <location>
        <begin position="551"/>
        <end position="553"/>
    </location>
</feature>
<feature type="strand" evidence="22">
    <location>
        <begin position="560"/>
        <end position="567"/>
    </location>
</feature>
<feature type="strand" evidence="22">
    <location>
        <begin position="578"/>
        <end position="585"/>
    </location>
</feature>
<feature type="strand" evidence="22">
    <location>
        <begin position="593"/>
        <end position="607"/>
    </location>
</feature>
<feature type="strand" evidence="22">
    <location>
        <begin position="619"/>
        <end position="621"/>
    </location>
</feature>
<feature type="strand" evidence="22">
    <location>
        <begin position="623"/>
        <end position="627"/>
    </location>
</feature>
<feature type="strand" evidence="22">
    <location>
        <begin position="634"/>
        <end position="638"/>
    </location>
</feature>
<feature type="helix" evidence="22">
    <location>
        <begin position="640"/>
        <end position="642"/>
    </location>
</feature>
<feature type="strand" evidence="22">
    <location>
        <begin position="643"/>
        <end position="645"/>
    </location>
</feature>
<feature type="strand" evidence="22">
    <location>
        <begin position="652"/>
        <end position="660"/>
    </location>
</feature>
<feature type="turn" evidence="22">
    <location>
        <begin position="661"/>
        <end position="664"/>
    </location>
</feature>
<feature type="strand" evidence="22">
    <location>
        <begin position="665"/>
        <end position="673"/>
    </location>
</feature>
<feature type="strand" evidence="21">
    <location>
        <begin position="757"/>
        <end position="760"/>
    </location>
</feature>
<feature type="strand" evidence="24">
    <location>
        <begin position="763"/>
        <end position="771"/>
    </location>
</feature>
<feature type="strand" evidence="24">
    <location>
        <begin position="773"/>
        <end position="780"/>
    </location>
</feature>
<feature type="strand" evidence="24">
    <location>
        <begin position="786"/>
        <end position="790"/>
    </location>
</feature>
<feature type="helix" evidence="24">
    <location>
        <begin position="791"/>
        <end position="793"/>
    </location>
</feature>
<feature type="strand" evidence="24">
    <location>
        <begin position="794"/>
        <end position="796"/>
    </location>
</feature>
<feature type="helix" evidence="24">
    <location>
        <begin position="798"/>
        <end position="800"/>
    </location>
</feature>
<feature type="strand" evidence="24">
    <location>
        <begin position="806"/>
        <end position="811"/>
    </location>
</feature>
<feature type="strand" evidence="21">
    <location>
        <begin position="819"/>
        <end position="822"/>
    </location>
</feature>
<feature type="strand" evidence="24">
    <location>
        <begin position="826"/>
        <end position="831"/>
    </location>
</feature>
<feature type="strand" evidence="24">
    <location>
        <begin position="847"/>
        <end position="853"/>
    </location>
</feature>
<feature type="helix" evidence="24">
    <location>
        <begin position="856"/>
        <end position="858"/>
    </location>
</feature>
<feature type="strand" evidence="24">
    <location>
        <begin position="865"/>
        <end position="872"/>
    </location>
</feature>
<feature type="strand" evidence="24">
    <location>
        <begin position="878"/>
        <end position="885"/>
    </location>
</feature>
<feature type="helix" evidence="24">
    <location>
        <begin position="887"/>
        <end position="889"/>
    </location>
</feature>
<feature type="strand" evidence="24">
    <location>
        <begin position="890"/>
        <end position="892"/>
    </location>
</feature>
<feature type="strand" evidence="24">
    <location>
        <begin position="902"/>
        <end position="908"/>
    </location>
</feature>
<feature type="strand" evidence="24">
    <location>
        <begin position="913"/>
        <end position="919"/>
    </location>
</feature>
<feature type="strand" evidence="24">
    <location>
        <begin position="923"/>
        <end position="931"/>
    </location>
</feature>
<feature type="strand" evidence="24">
    <location>
        <begin position="934"/>
        <end position="940"/>
    </location>
</feature>
<feature type="helix" evidence="24">
    <location>
        <begin position="942"/>
        <end position="944"/>
    </location>
</feature>
<feature type="strand" evidence="24">
    <location>
        <begin position="946"/>
        <end position="950"/>
    </location>
</feature>
<feature type="helix" evidence="24">
    <location>
        <begin position="951"/>
        <end position="953"/>
    </location>
</feature>
<feature type="strand" evidence="24">
    <location>
        <begin position="966"/>
        <end position="973"/>
    </location>
</feature>
<feature type="turn" evidence="24">
    <location>
        <begin position="975"/>
        <end position="977"/>
    </location>
</feature>
<feature type="strand" evidence="24">
    <location>
        <begin position="980"/>
        <end position="987"/>
    </location>
</feature>
<keyword id="KW-0002">3D-structure</keyword>
<keyword id="KW-0025">Alternative splicing</keyword>
<keyword id="KW-0963">Cytoplasm</keyword>
<keyword id="KW-0221">Differentiation</keyword>
<keyword id="KW-1185">Reference proteome</keyword>
<keyword id="KW-0677">Repeat</keyword>
<keyword id="KW-0694">RNA-binding</keyword>
<keyword id="KW-0726">Sexual differentiation</keyword>
<accession>B7Z0E2</accession>
<accession>M9ND61</accession>
<accession>Q960S8</accession>
<accession>Q9VSK3</accession>
<evidence type="ECO:0000255" key="1">
    <source>
        <dbReference type="PROSITE-ProRule" id="PRU01204"/>
    </source>
</evidence>
<evidence type="ECO:0000256" key="2">
    <source>
        <dbReference type="SAM" id="MobiDB-lite"/>
    </source>
</evidence>
<evidence type="ECO:0000269" key="3">
    <source>
    </source>
</evidence>
<evidence type="ECO:0000269" key="4">
    <source>
    </source>
</evidence>
<evidence type="ECO:0000269" key="5">
    <source>
    </source>
</evidence>
<evidence type="ECO:0000269" key="6">
    <source>
    </source>
</evidence>
<evidence type="ECO:0000269" key="7">
    <source>
    </source>
</evidence>
<evidence type="ECO:0000269" key="8">
    <source>
    </source>
</evidence>
<evidence type="ECO:0000269" key="9">
    <source>
    </source>
</evidence>
<evidence type="ECO:0000269" key="10">
    <source>
    </source>
</evidence>
<evidence type="ECO:0000303" key="11">
    <source>
    </source>
</evidence>
<evidence type="ECO:0000305" key="12"/>
<evidence type="ECO:0000305" key="13">
    <source>
    </source>
</evidence>
<evidence type="ECO:0000312" key="14">
    <source>
        <dbReference type="FlyBase" id="FBgn0263352"/>
    </source>
</evidence>
<evidence type="ECO:0007744" key="15">
    <source>
        <dbReference type="PDB" id="4QQB"/>
    </source>
</evidence>
<evidence type="ECO:0007744" key="16">
    <source>
        <dbReference type="PDB" id="6Y4H"/>
    </source>
</evidence>
<evidence type="ECO:0007744" key="17">
    <source>
        <dbReference type="PDB" id="6Y6E"/>
    </source>
</evidence>
<evidence type="ECO:0007744" key="18">
    <source>
        <dbReference type="PDB" id="7ZHH"/>
    </source>
</evidence>
<evidence type="ECO:0007744" key="19">
    <source>
        <dbReference type="PDB" id="7ZHR"/>
    </source>
</evidence>
<evidence type="ECO:0007829" key="20">
    <source>
        <dbReference type="PDB" id="4QQB"/>
    </source>
</evidence>
<evidence type="ECO:0007829" key="21">
    <source>
        <dbReference type="PDB" id="6Y4H"/>
    </source>
</evidence>
<evidence type="ECO:0007829" key="22">
    <source>
        <dbReference type="PDB" id="6Y6E"/>
    </source>
</evidence>
<evidence type="ECO:0007829" key="23">
    <source>
        <dbReference type="PDB" id="6Y6M"/>
    </source>
</evidence>
<evidence type="ECO:0007829" key="24">
    <source>
        <dbReference type="PDB" id="7ZHH"/>
    </source>
</evidence>
<sequence>MNTQSKVYRTGEEIYDNLPCDSYFNMNAIRNLGIPTTFPTIGTFTLDSTTLGLQPQGQGPSPQQQQHQQQQQQQQQQHQQNMHHHQHQQQHMQQQQQQQQHQQQHQQQQHQQQQQHQQQQQQQQQHPTIGMFDANEVNDVIQNPPQIGVFQSNSVLTNGAGSGSSIFGSQSSNSSAAAADPSQTTRETGIIEKLLHSYGFIQCCERQARLFFHFSQFSGNIDHLKIGDPVEFEMTYDRRTGKPIASQVSKIAPEVVLSEERVTGTVTTELRTDSANNVLNSSETTGRISYENRGECFFLPYTKDDVEGNVNLRAGDKVSFQIATNQRGNLGACHIRLENPAQPVKYRGVVCSMKESFGFIERADVVKEIFFHFSEAEGNVELRPGDDVEFTIQTRSSASVPPQGREFACNITRLAPGSVIFEDVDSTVYKGQVLKSLDRNNPVRQNNDPLPGRIRYRALDYSEVEVPFGDKDQKGDFTLRHGDWVQFLLATDRRDQLQRATSIALLDETFKVSGEKREQGTIASLKEGFGFLRCVERQARLFFHFTEVLDTSREIDINDEVEFTVIQEPGLAYNNSRLQAIRIKHLPPNSVQFETLVASNIEGCVTREAPKSPIKSQDRVEGGVITYEHADVKKTIMYFLKDCEKPPRIGERVRFDIYMVKRNKECIAVNVQQVSLHQQQQQQQQQLHLNQSNAGANINQNDQLGGLSNGISSSSSNASLQNGYVMHGSPGGSTSSVGSNNPVHLDEFKMENNNHAGSDAGQVYRGFIAVMKENFGFIETLSHDEEVFFHFSNYMGNPNWLELGQEVEYTLARNGNTSVSGNCLPAENVRMLPKNSIPQPAVLETTHNGVVARPLRCINPDQQEYAGLIEILDELRTTVISQHEFGITSLVNKRDLLQKGDLVSFRIDESGRAACVNAVRQKKRATVDSIKGQFGFLNFEVEDGKKLFFHMSEVQGNTVALHPGDTVEFSVVTNQRNGKSSACNVLKINDRPDRLISRLKLNGDDTVPRLILIRAPKGPQGKGFSVLARHPRIPGNLVE</sequence>
<protein>
    <recommendedName>
        <fullName evidence="12">RNA-binding protein Unr</fullName>
    </recommendedName>
    <alternativeName>
        <fullName evidence="12">Protein upstream of N-ras homolog</fullName>
    </alternativeName>
</protein>
<organism>
    <name type="scientific">Drosophila melanogaster</name>
    <name type="common">Fruit fly</name>
    <dbReference type="NCBI Taxonomy" id="7227"/>
    <lineage>
        <taxon>Eukaryota</taxon>
        <taxon>Metazoa</taxon>
        <taxon>Ecdysozoa</taxon>
        <taxon>Arthropoda</taxon>
        <taxon>Hexapoda</taxon>
        <taxon>Insecta</taxon>
        <taxon>Pterygota</taxon>
        <taxon>Neoptera</taxon>
        <taxon>Endopterygota</taxon>
        <taxon>Diptera</taxon>
        <taxon>Brachycera</taxon>
        <taxon>Muscomorpha</taxon>
        <taxon>Ephydroidea</taxon>
        <taxon>Drosophilidae</taxon>
        <taxon>Drosophila</taxon>
        <taxon>Sophophora</taxon>
    </lineage>
</organism>
<dbReference type="EMBL" id="AE014296">
    <property type="protein sequence ID" value="AAF50415.2"/>
    <property type="molecule type" value="Genomic_DNA"/>
</dbReference>
<dbReference type="EMBL" id="AE014296">
    <property type="protein sequence ID" value="ACL83267.1"/>
    <property type="molecule type" value="Genomic_DNA"/>
</dbReference>
<dbReference type="EMBL" id="AE014296">
    <property type="protein sequence ID" value="AFH04340.1"/>
    <property type="molecule type" value="Genomic_DNA"/>
</dbReference>
<dbReference type="EMBL" id="AE014296">
    <property type="protein sequence ID" value="AGB94274.1"/>
    <property type="molecule type" value="Genomic_DNA"/>
</dbReference>
<dbReference type="EMBL" id="AE014296">
    <property type="protein sequence ID" value="AHN58008.1"/>
    <property type="molecule type" value="Genomic_DNA"/>
</dbReference>
<dbReference type="EMBL" id="AY051878">
    <property type="protein sequence ID" value="AAK93302.1"/>
    <property type="status" value="ALT_INIT"/>
    <property type="molecule type" value="mRNA"/>
</dbReference>
<dbReference type="EMBL" id="BT133161">
    <property type="protein sequence ID" value="AEZ02854.1"/>
    <property type="molecule type" value="mRNA"/>
</dbReference>
<dbReference type="RefSeq" id="NP_001137912.1">
    <molecule id="B7Z0E2-2"/>
    <property type="nucleotide sequence ID" value="NM_001144440.2"/>
</dbReference>
<dbReference type="RefSeq" id="NP_001246669.1">
    <molecule id="B7Z0E2-3"/>
    <property type="nucleotide sequence ID" value="NM_001259740.2"/>
</dbReference>
<dbReference type="RefSeq" id="NP_001261579.1">
    <molecule id="B7Z0E2-2"/>
    <property type="nucleotide sequence ID" value="NM_001274650.1"/>
</dbReference>
<dbReference type="RefSeq" id="NP_001286983.1">
    <molecule id="B7Z0E2-2"/>
    <property type="nucleotide sequence ID" value="NM_001300054.1"/>
</dbReference>
<dbReference type="RefSeq" id="NP_648226.2">
    <molecule id="B7Z0E2-1"/>
    <property type="nucleotide sequence ID" value="NM_139969.4"/>
</dbReference>
<dbReference type="PDB" id="4QQB">
    <property type="method" value="X-ray"/>
    <property type="resolution" value="2.80 A"/>
    <property type="chains" value="X/Y=185-252"/>
</dbReference>
<dbReference type="PDB" id="6Y4H">
    <property type="method" value="NMR"/>
    <property type="chains" value="A=756-922"/>
</dbReference>
<dbReference type="PDB" id="6Y6E">
    <property type="method" value="X-ray"/>
    <property type="resolution" value="2.02 A"/>
    <property type="chains" value="A=424-677"/>
</dbReference>
<dbReference type="PDB" id="6Y6M">
    <property type="method" value="NMR"/>
    <property type="chains" value="A=186-344"/>
</dbReference>
<dbReference type="PDB" id="6Y96">
    <property type="method" value="NMR"/>
    <property type="chains" value="A=899-990"/>
</dbReference>
<dbReference type="PDB" id="7ZHH">
    <property type="method" value="X-ray"/>
    <property type="resolution" value="1.60 A"/>
    <property type="chains" value="A=756-990"/>
</dbReference>
<dbReference type="PDB" id="7ZHR">
    <property type="method" value="X-ray"/>
    <property type="resolution" value="2.99 A"/>
    <property type="chains" value="A=756-990"/>
</dbReference>
<dbReference type="PDBsum" id="4QQB"/>
<dbReference type="PDBsum" id="6Y4H"/>
<dbReference type="PDBsum" id="6Y6E"/>
<dbReference type="PDBsum" id="6Y6M"/>
<dbReference type="PDBsum" id="6Y96"/>
<dbReference type="PDBsum" id="7ZHH"/>
<dbReference type="PDBsum" id="7ZHR"/>
<dbReference type="SMR" id="B7Z0E2"/>
<dbReference type="FunCoup" id="B7Z0E2">
    <property type="interactions" value="1454"/>
</dbReference>
<dbReference type="IntAct" id="B7Z0E2">
    <property type="interactions" value="30"/>
</dbReference>
<dbReference type="PaxDb" id="7227-FBpp0113084"/>
<dbReference type="DNASU" id="38963"/>
<dbReference type="EnsemblMetazoa" id="FBtr0076661">
    <molecule id="B7Z0E2-1"/>
    <property type="protein sequence ID" value="FBpp0076384"/>
    <property type="gene ID" value="FBgn0263352"/>
</dbReference>
<dbReference type="EnsemblMetazoa" id="FBtr0114592">
    <molecule id="B7Z0E2-2"/>
    <property type="protein sequence ID" value="FBpp0113084"/>
    <property type="gene ID" value="FBgn0263352"/>
</dbReference>
<dbReference type="EnsemblMetazoa" id="FBtr0308954">
    <molecule id="B7Z0E2-3"/>
    <property type="protein sequence ID" value="FBpp0301053"/>
    <property type="gene ID" value="FBgn0263352"/>
</dbReference>
<dbReference type="EnsemblMetazoa" id="FBtr0332984">
    <molecule id="B7Z0E2-2"/>
    <property type="protein sequence ID" value="FBpp0305200"/>
    <property type="gene ID" value="FBgn0263352"/>
</dbReference>
<dbReference type="EnsemblMetazoa" id="FBtr0345595">
    <molecule id="B7Z0E2-2"/>
    <property type="protein sequence ID" value="FBpp0311664"/>
    <property type="gene ID" value="FBgn0263352"/>
</dbReference>
<dbReference type="GeneID" id="38963"/>
<dbReference type="KEGG" id="dme:Dmel_CG7015"/>
<dbReference type="AGR" id="FB:FBgn0263352"/>
<dbReference type="CTD" id="38963"/>
<dbReference type="FlyBase" id="FBgn0263352">
    <property type="gene designation" value="Unr"/>
</dbReference>
<dbReference type="VEuPathDB" id="VectorBase:FBgn0263352"/>
<dbReference type="eggNOG" id="ENOG502QSJ1">
    <property type="taxonomic scope" value="Eukaryota"/>
</dbReference>
<dbReference type="GeneTree" id="ENSGT00390000016950"/>
<dbReference type="HOGENOM" id="CLU_012335_0_0_1"/>
<dbReference type="InParanoid" id="B7Z0E2"/>
<dbReference type="OMA" id="NLGACHV"/>
<dbReference type="OrthoDB" id="74319at2759"/>
<dbReference type="BioGRID-ORCS" id="38963">
    <property type="hits" value="0 hits in 1 CRISPR screen"/>
</dbReference>
<dbReference type="ChiTaRS" id="Unr">
    <property type="organism name" value="fly"/>
</dbReference>
<dbReference type="GenomeRNAi" id="38963"/>
<dbReference type="Proteomes" id="UP000000803">
    <property type="component" value="Chromosome 3L"/>
</dbReference>
<dbReference type="Bgee" id="FBgn0263352">
    <property type="expression patterns" value="Expressed in medullary intrinsic neuron Mi9 (Drosophila) in insect head and 290 other cell types or tissues"/>
</dbReference>
<dbReference type="ExpressionAtlas" id="B7Z0E2">
    <property type="expression patterns" value="baseline and differential"/>
</dbReference>
<dbReference type="GO" id="GO:0005829">
    <property type="term" value="C:cytosol"/>
    <property type="evidence" value="ECO:0000314"/>
    <property type="project" value="FlyBase"/>
</dbReference>
<dbReference type="GO" id="GO:0106222">
    <property type="term" value="F:lncRNA binding"/>
    <property type="evidence" value="ECO:0000314"/>
    <property type="project" value="FlyBase"/>
</dbReference>
<dbReference type="GO" id="GO:0003730">
    <property type="term" value="F:mRNA 3'-UTR binding"/>
    <property type="evidence" value="ECO:0000314"/>
    <property type="project" value="UniProtKB"/>
</dbReference>
<dbReference type="GO" id="GO:0000900">
    <property type="term" value="F:mRNA regulatory element binding translation repressor activity"/>
    <property type="evidence" value="ECO:0000314"/>
    <property type="project" value="UniProtKB"/>
</dbReference>
<dbReference type="GO" id="GO:0140517">
    <property type="term" value="F:protein-RNA adaptor activity"/>
    <property type="evidence" value="ECO:0000314"/>
    <property type="project" value="UniProtKB"/>
</dbReference>
<dbReference type="GO" id="GO:1905172">
    <property type="term" value="F:RISC complex binding"/>
    <property type="evidence" value="ECO:0000353"/>
    <property type="project" value="FlyBase"/>
</dbReference>
<dbReference type="GO" id="GO:0003723">
    <property type="term" value="F:RNA binding"/>
    <property type="evidence" value="ECO:0000314"/>
    <property type="project" value="UniProtKB"/>
</dbReference>
<dbReference type="GO" id="GO:0030154">
    <property type="term" value="P:cell differentiation"/>
    <property type="evidence" value="ECO:0007669"/>
    <property type="project" value="UniProtKB-KW"/>
</dbReference>
<dbReference type="GO" id="GO:0042714">
    <property type="term" value="P:dosage compensation complex assembly"/>
    <property type="evidence" value="ECO:0000314"/>
    <property type="project" value="FlyBase"/>
</dbReference>
<dbReference type="GO" id="GO:0045947">
    <property type="term" value="P:negative regulation of translational initiation"/>
    <property type="evidence" value="ECO:0000314"/>
    <property type="project" value="UniProtKB"/>
</dbReference>
<dbReference type="GO" id="GO:0007548">
    <property type="term" value="P:sex differentiation"/>
    <property type="evidence" value="ECO:0007669"/>
    <property type="project" value="UniProtKB-KW"/>
</dbReference>
<dbReference type="CDD" id="cd04458">
    <property type="entry name" value="CSP_CDS"/>
    <property type="match status" value="4"/>
</dbReference>
<dbReference type="FunFam" id="2.40.50.140:FF:000055">
    <property type="entry name" value="Cold shock domain containing E1, RNA-binding"/>
    <property type="match status" value="1"/>
</dbReference>
<dbReference type="FunFam" id="2.40.50.140:FF:000226">
    <property type="entry name" value="Uncharacterized protein, isoform A"/>
    <property type="match status" value="1"/>
</dbReference>
<dbReference type="FunFam" id="2.40.50.140:FF:000260">
    <property type="entry name" value="Uncharacterized protein, isoform A"/>
    <property type="match status" value="1"/>
</dbReference>
<dbReference type="FunFam" id="2.40.50.140:FF:000264">
    <property type="entry name" value="Uncharacterized protein, isoform A"/>
    <property type="match status" value="1"/>
</dbReference>
<dbReference type="Gene3D" id="2.40.50.140">
    <property type="entry name" value="Nucleic acid-binding proteins"/>
    <property type="match status" value="6"/>
</dbReference>
<dbReference type="InterPro" id="IPR011129">
    <property type="entry name" value="CSD"/>
</dbReference>
<dbReference type="InterPro" id="IPR019844">
    <property type="entry name" value="CSD_CS"/>
</dbReference>
<dbReference type="InterPro" id="IPR056400">
    <property type="entry name" value="CSDE1"/>
</dbReference>
<dbReference type="InterPro" id="IPR002059">
    <property type="entry name" value="CSP_DNA-bd"/>
</dbReference>
<dbReference type="InterPro" id="IPR012340">
    <property type="entry name" value="NA-bd_OB-fold"/>
</dbReference>
<dbReference type="PANTHER" id="PTHR12913:SF1">
    <property type="entry name" value="COLD SHOCK DOMAIN-CONTAINING PROTEIN E1"/>
    <property type="match status" value="1"/>
</dbReference>
<dbReference type="PANTHER" id="PTHR12913">
    <property type="entry name" value="UNR PROTEIN N-RAS UPSTREAM GENE PROTEIN"/>
    <property type="match status" value="1"/>
</dbReference>
<dbReference type="Pfam" id="PF00313">
    <property type="entry name" value="CSD"/>
    <property type="match status" value="5"/>
</dbReference>
<dbReference type="Pfam" id="PF23456">
    <property type="entry name" value="CSDE1"/>
    <property type="match status" value="2"/>
</dbReference>
<dbReference type="SMART" id="SM00357">
    <property type="entry name" value="CSP"/>
    <property type="match status" value="5"/>
</dbReference>
<dbReference type="SUPFAM" id="SSF50249">
    <property type="entry name" value="Nucleic acid-binding proteins"/>
    <property type="match status" value="5"/>
</dbReference>
<dbReference type="PROSITE" id="PS00352">
    <property type="entry name" value="CSD_1"/>
    <property type="match status" value="3"/>
</dbReference>
<dbReference type="PROSITE" id="PS51857">
    <property type="entry name" value="CSD_2"/>
    <property type="match status" value="5"/>
</dbReference>
<gene>
    <name evidence="11 14" type="primary">Unr</name>
    <name evidence="14" type="ORF">CG7015</name>
</gene>
<reference key="1">
    <citation type="journal article" date="2000" name="Science">
        <title>The genome sequence of Drosophila melanogaster.</title>
        <authorList>
            <person name="Adams M.D."/>
            <person name="Celniker S.E."/>
            <person name="Holt R.A."/>
            <person name="Evans C.A."/>
            <person name="Gocayne J.D."/>
            <person name="Amanatides P.G."/>
            <person name="Scherer S.E."/>
            <person name="Li P.W."/>
            <person name="Hoskins R.A."/>
            <person name="Galle R.F."/>
            <person name="George R.A."/>
            <person name="Lewis S.E."/>
            <person name="Richards S."/>
            <person name="Ashburner M."/>
            <person name="Henderson S.N."/>
            <person name="Sutton G.G."/>
            <person name="Wortman J.R."/>
            <person name="Yandell M.D."/>
            <person name="Zhang Q."/>
            <person name="Chen L.X."/>
            <person name="Brandon R.C."/>
            <person name="Rogers Y.-H.C."/>
            <person name="Blazej R.G."/>
            <person name="Champe M."/>
            <person name="Pfeiffer B.D."/>
            <person name="Wan K.H."/>
            <person name="Doyle C."/>
            <person name="Baxter E.G."/>
            <person name="Helt G."/>
            <person name="Nelson C.R."/>
            <person name="Miklos G.L.G."/>
            <person name="Abril J.F."/>
            <person name="Agbayani A."/>
            <person name="An H.-J."/>
            <person name="Andrews-Pfannkoch C."/>
            <person name="Baldwin D."/>
            <person name="Ballew R.M."/>
            <person name="Basu A."/>
            <person name="Baxendale J."/>
            <person name="Bayraktaroglu L."/>
            <person name="Beasley E.M."/>
            <person name="Beeson K.Y."/>
            <person name="Benos P.V."/>
            <person name="Berman B.P."/>
            <person name="Bhandari D."/>
            <person name="Bolshakov S."/>
            <person name="Borkova D."/>
            <person name="Botchan M.R."/>
            <person name="Bouck J."/>
            <person name="Brokstein P."/>
            <person name="Brottier P."/>
            <person name="Burtis K.C."/>
            <person name="Busam D.A."/>
            <person name="Butler H."/>
            <person name="Cadieu E."/>
            <person name="Center A."/>
            <person name="Chandra I."/>
            <person name="Cherry J.M."/>
            <person name="Cawley S."/>
            <person name="Dahlke C."/>
            <person name="Davenport L.B."/>
            <person name="Davies P."/>
            <person name="de Pablos B."/>
            <person name="Delcher A."/>
            <person name="Deng Z."/>
            <person name="Mays A.D."/>
            <person name="Dew I."/>
            <person name="Dietz S.M."/>
            <person name="Dodson K."/>
            <person name="Doup L.E."/>
            <person name="Downes M."/>
            <person name="Dugan-Rocha S."/>
            <person name="Dunkov B.C."/>
            <person name="Dunn P."/>
            <person name="Durbin K.J."/>
            <person name="Evangelista C.C."/>
            <person name="Ferraz C."/>
            <person name="Ferriera S."/>
            <person name="Fleischmann W."/>
            <person name="Fosler C."/>
            <person name="Gabrielian A.E."/>
            <person name="Garg N.S."/>
            <person name="Gelbart W.M."/>
            <person name="Glasser K."/>
            <person name="Glodek A."/>
            <person name="Gong F."/>
            <person name="Gorrell J.H."/>
            <person name="Gu Z."/>
            <person name="Guan P."/>
            <person name="Harris M."/>
            <person name="Harris N.L."/>
            <person name="Harvey D.A."/>
            <person name="Heiman T.J."/>
            <person name="Hernandez J.R."/>
            <person name="Houck J."/>
            <person name="Hostin D."/>
            <person name="Houston K.A."/>
            <person name="Howland T.J."/>
            <person name="Wei M.-H."/>
            <person name="Ibegwam C."/>
            <person name="Jalali M."/>
            <person name="Kalush F."/>
            <person name="Karpen G.H."/>
            <person name="Ke Z."/>
            <person name="Kennison J.A."/>
            <person name="Ketchum K.A."/>
            <person name="Kimmel B.E."/>
            <person name="Kodira C.D."/>
            <person name="Kraft C.L."/>
            <person name="Kravitz S."/>
            <person name="Kulp D."/>
            <person name="Lai Z."/>
            <person name="Lasko P."/>
            <person name="Lei Y."/>
            <person name="Levitsky A.A."/>
            <person name="Li J.H."/>
            <person name="Li Z."/>
            <person name="Liang Y."/>
            <person name="Lin X."/>
            <person name="Liu X."/>
            <person name="Mattei B."/>
            <person name="McIntosh T.C."/>
            <person name="McLeod M.P."/>
            <person name="McPherson D."/>
            <person name="Merkulov G."/>
            <person name="Milshina N.V."/>
            <person name="Mobarry C."/>
            <person name="Morris J."/>
            <person name="Moshrefi A."/>
            <person name="Mount S.M."/>
            <person name="Moy M."/>
            <person name="Murphy B."/>
            <person name="Murphy L."/>
            <person name="Muzny D.M."/>
            <person name="Nelson D.L."/>
            <person name="Nelson D.R."/>
            <person name="Nelson K.A."/>
            <person name="Nixon K."/>
            <person name="Nusskern D.R."/>
            <person name="Pacleb J.M."/>
            <person name="Palazzolo M."/>
            <person name="Pittman G.S."/>
            <person name="Pan S."/>
            <person name="Pollard J."/>
            <person name="Puri V."/>
            <person name="Reese M.G."/>
            <person name="Reinert K."/>
            <person name="Remington K."/>
            <person name="Saunders R.D.C."/>
            <person name="Scheeler F."/>
            <person name="Shen H."/>
            <person name="Shue B.C."/>
            <person name="Siden-Kiamos I."/>
            <person name="Simpson M."/>
            <person name="Skupski M.P."/>
            <person name="Smith T.J."/>
            <person name="Spier E."/>
            <person name="Spradling A.C."/>
            <person name="Stapleton M."/>
            <person name="Strong R."/>
            <person name="Sun E."/>
            <person name="Svirskas R."/>
            <person name="Tector C."/>
            <person name="Turner R."/>
            <person name="Venter E."/>
            <person name="Wang A.H."/>
            <person name="Wang X."/>
            <person name="Wang Z.-Y."/>
            <person name="Wassarman D.A."/>
            <person name="Weinstock G.M."/>
            <person name="Weissenbach J."/>
            <person name="Williams S.M."/>
            <person name="Woodage T."/>
            <person name="Worley K.C."/>
            <person name="Wu D."/>
            <person name="Yang S."/>
            <person name="Yao Q.A."/>
            <person name="Ye J."/>
            <person name="Yeh R.-F."/>
            <person name="Zaveri J.S."/>
            <person name="Zhan M."/>
            <person name="Zhang G."/>
            <person name="Zhao Q."/>
            <person name="Zheng L."/>
            <person name="Zheng X.H."/>
            <person name="Zhong F.N."/>
            <person name="Zhong W."/>
            <person name="Zhou X."/>
            <person name="Zhu S.C."/>
            <person name="Zhu X."/>
            <person name="Smith H.O."/>
            <person name="Gibbs R.A."/>
            <person name="Myers E.W."/>
            <person name="Rubin G.M."/>
            <person name="Venter J.C."/>
        </authorList>
    </citation>
    <scope>NUCLEOTIDE SEQUENCE [LARGE SCALE GENOMIC DNA]</scope>
    <source>
        <strain>Berkeley</strain>
    </source>
</reference>
<reference key="2">
    <citation type="journal article" date="2002" name="Genome Biol.">
        <title>Annotation of the Drosophila melanogaster euchromatic genome: a systematic review.</title>
        <authorList>
            <person name="Misra S."/>
            <person name="Crosby M.A."/>
            <person name="Mungall C.J."/>
            <person name="Matthews B.B."/>
            <person name="Campbell K.S."/>
            <person name="Hradecky P."/>
            <person name="Huang Y."/>
            <person name="Kaminker J.S."/>
            <person name="Millburn G.H."/>
            <person name="Prochnik S.E."/>
            <person name="Smith C.D."/>
            <person name="Tupy J.L."/>
            <person name="Whitfield E.J."/>
            <person name="Bayraktaroglu L."/>
            <person name="Berman B.P."/>
            <person name="Bettencourt B.R."/>
            <person name="Celniker S.E."/>
            <person name="de Grey A.D.N.J."/>
            <person name="Drysdale R.A."/>
            <person name="Harris N.L."/>
            <person name="Richter J."/>
            <person name="Russo S."/>
            <person name="Schroeder A.J."/>
            <person name="Shu S.Q."/>
            <person name="Stapleton M."/>
            <person name="Yamada C."/>
            <person name="Ashburner M."/>
            <person name="Gelbart W.M."/>
            <person name="Rubin G.M."/>
            <person name="Lewis S.E."/>
        </authorList>
    </citation>
    <scope>GENOME REANNOTATION</scope>
    <source>
        <strain>Berkeley</strain>
    </source>
</reference>
<reference key="3">
    <citation type="submission" date="2012-01" db="EMBL/GenBank/DDBJ databases">
        <authorList>
            <person name="Carlson J."/>
            <person name="Booth B."/>
            <person name="Frise E."/>
            <person name="Park S."/>
            <person name="Wan K."/>
            <person name="Yu C."/>
            <person name="Celniker S."/>
        </authorList>
    </citation>
    <scope>NUCLEOTIDE SEQUENCE [LARGE SCALE MRNA] (ISOFORM B)</scope>
</reference>
<reference key="4">
    <citation type="journal article" date="2002" name="Genome Biol.">
        <title>A Drosophila full-length cDNA resource.</title>
        <authorList>
            <person name="Stapleton M."/>
            <person name="Carlson J.W."/>
            <person name="Brokstein P."/>
            <person name="Yu C."/>
            <person name="Champe M."/>
            <person name="George R.A."/>
            <person name="Guarin H."/>
            <person name="Kronmiller B."/>
            <person name="Pacleb J.M."/>
            <person name="Park S."/>
            <person name="Wan K.H."/>
            <person name="Rubin G.M."/>
            <person name="Celniker S.E."/>
        </authorList>
    </citation>
    <scope>NUCLEOTIDE SEQUENCE [LARGE SCALE MRNA] OF 231-1039</scope>
    <source>
        <strain>Berkeley</strain>
        <tissue>Embryo</tissue>
    </source>
</reference>
<reference key="5">
    <citation type="journal article" date="2006" name="Genes Dev.">
        <title>Sex-lethal imparts a sex-specific function to UNR by recruiting it to the msl-2 mRNA 3' UTR: translational repression for dosage compensation.</title>
        <authorList>
            <person name="Duncan K."/>
            <person name="Grskovic M."/>
            <person name="Strein C."/>
            <person name="Beckmann K."/>
            <person name="Niggeweg R."/>
            <person name="Abaza I."/>
            <person name="Gebauer F."/>
            <person name="Wilm M."/>
            <person name="Hentze M.W."/>
        </authorList>
    </citation>
    <scope>FUNCTION</scope>
    <scope>INTERACTION WITH SXL</scope>
</reference>
<reference key="6">
    <citation type="journal article" date="2006" name="Genes Dev.">
        <title>Drosophila UNR is required for translational repression of male-specific lethal 2 mRNA during regulation of X-chromosome dosage compensation.</title>
        <authorList>
            <person name="Abaza I."/>
            <person name="Coll O."/>
            <person name="Patalano S."/>
            <person name="Gebauer F."/>
        </authorList>
    </citation>
    <scope>FUNCTION</scope>
    <scope>INTERACTION WITH SXL</scope>
    <scope>SUBCELLULAR LOCATION</scope>
    <scope>DEVELOPMENTAL STAGE</scope>
</reference>
<reference key="7">
    <citation type="journal article" date="2008" name="RNA">
        <title>Functional domains of Drosophila UNR in translational control.</title>
        <authorList>
            <person name="Abaza I."/>
            <person name="Gebauer F."/>
        </authorList>
    </citation>
    <scope>FUNCTION</scope>
    <scope>DOMAIN</scope>
    <scope>INTERACTION WITH SXL</scope>
    <scope>MUTAGENESIS OF TYR-198; GLN-202; GLN-216; LYS-225; GLU-233; ASP-237; ARG-238 AND ILE-244</scope>
</reference>
<reference key="8">
    <citation type="journal article" date="2009" name="Development">
        <title>Dual sex-specific functions of Drosophila Upstream of N-ras in the control of X chromosome dosage compensation.</title>
        <authorList>
            <person name="Patalano S."/>
            <person name="Mihailovich M."/>
            <person name="Belacortu Y."/>
            <person name="Paricio N."/>
            <person name="Gebauer F."/>
        </authorList>
    </citation>
    <scope>FUNCTION</scope>
</reference>
<reference key="9">
    <citation type="journal article" date="2009" name="Mol. Cell">
        <title>The SXL-UNR corepressor complex uses a PABP-mediated mechanism to inhibit ribosome recruitment to msl-2 mRNA.</title>
        <authorList>
            <person name="Duncan K.E."/>
            <person name="Strein C."/>
            <person name="Hentze M.W."/>
        </authorList>
    </citation>
    <scope>FUNCTION</scope>
    <scope>INTERACTION WITH SXL AND PABP</scope>
</reference>
<reference key="10">
    <citation type="journal article" date="2014" name="Nat. Commun.">
        <title>UNR facilitates the interaction of MLE with the lncRNA roX2 during Drosophila dosage compensation.</title>
        <authorList>
            <person name="Militti C."/>
            <person name="Maenner S."/>
            <person name="Becker P.B."/>
            <person name="Gebauer F."/>
        </authorList>
    </citation>
    <scope>FUNCTION</scope>
    <scope>INTERACTION WITH MLE</scope>
</reference>
<reference evidence="15" key="11">
    <citation type="journal article" date="2014" name="Nature">
        <title>Structural basis for the assembly of the Sxl-Unr translation regulatory complex.</title>
        <authorList>
            <person name="Hennig J."/>
            <person name="Militti C."/>
            <person name="Popowicz G.M."/>
            <person name="Wang I."/>
            <person name="Sonntag M."/>
            <person name="Geerlof A."/>
            <person name="Gabel F."/>
            <person name="Gebauer F."/>
            <person name="Sattler M."/>
        </authorList>
    </citation>
    <scope>X-RAY CRYSTALLOGRAPHY (2.80 ANGSTROMS) OF 185-252 IN COMPLEX WITH SXL AND MSL-2 MRNA</scope>
    <scope>FUNCTION</scope>
    <scope>INTERACTION WITH SXL</scope>
</reference>
<reference evidence="16 17" key="12">
    <citation type="journal article" date="2020" name="Cell Rep.">
        <title>Pseudo-RNA-binding domains mediate RNA structure specificity in Upstream of N-Ras.</title>
        <authorList>
            <person name="Hollmann N.M."/>
            <person name="Jagtap P.K.A."/>
            <person name="Masiewicz P."/>
            <person name="Guitart T."/>
            <person name="Simon B."/>
            <person name="Provaznik J."/>
            <person name="Stein F."/>
            <person name="Haberkant P."/>
            <person name="Sweetapple L.J."/>
            <person name="Villacorta L."/>
            <person name="Mooijman D."/>
            <person name="Benes V."/>
            <person name="Savitski M.M."/>
            <person name="Gebauer F."/>
            <person name="Hennig J."/>
        </authorList>
    </citation>
    <scope>X-RAY CRYSTALLOGRAPHY (2.02 ANGSTROMS) OF 424-677</scope>
    <scope>DOMAIN</scope>
</reference>
<reference evidence="18 19" key="13">
    <citation type="journal article" date="2023" name="Nucleic Acids Res.">
        <title>Upstream of N-Ras C-terminal cold shock domains mediate poly(A) specificity in a novel RNA recognition mode and bind poly(A) binding protein.</title>
        <authorList>
            <person name="Hollmann N.M."/>
            <person name="Jagtap P.K.A."/>
            <person name="Linse J.B."/>
            <person name="Ullmann P."/>
            <person name="Payr M."/>
            <person name="Murciano B."/>
            <person name="Simon B."/>
            <person name="Hub J.S."/>
            <person name="Hennig J."/>
        </authorList>
    </citation>
    <scope>X-RAY CRYSTALLOGRAPHY (1.60 ANGSTROMS) OF 756-990</scope>
    <scope>RNA-BINDING</scope>
    <scope>INTERACTION WITH PABP</scope>
    <scope>MUTAGENESIS OF GLU-786; ARG-856; GLN-898; GLN-975; 977-ASN--LYS-979; ASN-977 AND LYS-979</scope>
</reference>
<proteinExistence type="evidence at protein level"/>
<name>UNR_DROME</name>
<comment type="function">
    <text evidence="3 4 5 6 7 8">RNA-binding protein that acts as a regulator of dosage compensation in both males and females (PubMed:16452508, PubMed:16452509, PubMed:18203923, PubMed:19168682, PubMed:19941818, PubMed:25158899). In males, acts as positive regulator of dosage compensation by promoting assembly of the MSL complex, a multiprotein complex that mediates X-chromosome dosage compensation (PubMed:19168682, PubMed:25158899). Promotes MSL complex assembly via association with roX1 and roX2 non-coding RNA components of the MSL complex, facilitating the interaction between non-coding RNAs and mle (PubMed:19168682, PubMed:25158899). In females, acts as an inhibitor of dosage compensation together with Sxl by preventing production of msl-2 protein, an essential component of the MSL complex (PubMed:16452508, PubMed:16452509, PubMed:18203923, PubMed:19941818). Specifically binds to the 3'-UTR of msl-2 transcripts, and cooperates with Sxl to prevent translation initiation of msl-2 transcripts (PubMed:16452508, PubMed:16452509, PubMed:18203923, PubMed:19941818). Mechanistically, Sxl and Unr inhibit translation initiation by preventing ribosome recruitment after pAbp-mediated recruitment of the eIF4F complex (PubMed:19941818).</text>
</comment>
<comment type="subunit">
    <text evidence="3 4 5 7 8 10">Interacts with Sxl; cooperates with Sxl to prevent translation of msl-2 transcripts (PubMed:16452508, PubMed:16452509, PubMed:18203923, PubMed:19941818). Interacts with mle; promoting association between mle and roX2 non-coding RNA (PubMed:25158899). Interacts (via CSD domain 7-9) with pAbp; promoting translation inhibition of msl-2 transcripts (PubMed:19941818, PubMed:36688322).</text>
</comment>
<comment type="interaction">
    <interactant intactId="EBI-194879">
        <id>B7Z0E2</id>
    </interactant>
    <interactant intactId="EBI-16120780">
        <id>P19339-1</id>
        <label>Sxl</label>
    </interactant>
    <organismsDiffer>false</organismsDiffer>
    <experiments>8</experiments>
</comment>
<comment type="subcellular location">
    <subcellularLocation>
        <location evidence="4">Cytoplasm</location>
    </subcellularLocation>
</comment>
<comment type="alternative products">
    <event type="alternative splicing"/>
    <isoform>
        <id>B7Z0E2-1</id>
        <name>A</name>
        <sequence type="displayed"/>
    </isoform>
    <isoform>
        <id>B7Z0E2-2</id>
        <name>B</name>
        <name>D</name>
        <name>E</name>
        <sequence type="described" ref="VSP_062303"/>
    </isoform>
    <isoform>
        <id>B7Z0E2-3</id>
        <name>C</name>
        <sequence type="described" ref="VSP_062304"/>
    </isoform>
</comment>
<comment type="developmental stage">
    <text evidence="4">Expressed throughout development.</text>
</comment>
<comment type="domain">
    <text evidence="5 9 10">Composed of 5 canonical CSD domains that mediate RNA-binding as well as 4 degenerate CSD domains (non-canonical) that do not bind RNA (PubMed:32697992). Interactions between canonical and non-canonical CSD domains mediate RNA tertiary structure specificity by reducing the conformational heterogeneity (PubMed:32697992). The CSD domain 1 mediates association with the 3'-UTR of msl-2 transcripts (PubMed:18203923). CSD domains 7-9 at the C-terminus bind to poly(A) sequences of RNAS (PubMed:36688322).</text>
</comment>
<comment type="similarity">
    <text evidence="12">Belongs to the UNR family.</text>
</comment>
<comment type="sequence caution" evidence="12">
    <conflict type="erroneous initiation">
        <sequence resource="EMBL-CDS" id="AAK93302"/>
    </conflict>
    <text>Truncated N-terminus.</text>
</comment>